<name>PSAB_YERPS</name>
<comment type="function">
    <text>Required for the biogenesis of the pH 6 antigen.</text>
</comment>
<comment type="subcellular location">
    <subcellularLocation>
        <location evidence="1">Periplasm</location>
    </subcellularLocation>
</comment>
<comment type="similarity">
    <text evidence="3">Belongs to the periplasmic pilus chaperone family.</text>
</comment>
<comment type="caution">
    <text evidence="3">It is uncertain whether Met-1 or Met-23 is the initiator.</text>
</comment>
<organism>
    <name type="scientific">Yersinia pseudotuberculosis serotype I (strain IP32953)</name>
    <dbReference type="NCBI Taxonomy" id="273123"/>
    <lineage>
        <taxon>Bacteria</taxon>
        <taxon>Pseudomonadati</taxon>
        <taxon>Pseudomonadota</taxon>
        <taxon>Gammaproteobacteria</taxon>
        <taxon>Enterobacterales</taxon>
        <taxon>Yersiniaceae</taxon>
        <taxon>Yersinia</taxon>
    </lineage>
</organism>
<evidence type="ECO:0000250" key="1"/>
<evidence type="ECO:0000255" key="2"/>
<evidence type="ECO:0000305" key="3"/>
<feature type="signal peptide" evidence="2">
    <location>
        <begin position="1"/>
        <end position="31"/>
    </location>
</feature>
<feature type="chain" id="PRO_0000009288" description="Chaperone protein PsaB">
    <location>
        <begin position="32"/>
        <end position="273"/>
    </location>
</feature>
<feature type="disulfide bond" evidence="2">
    <location>
        <begin position="128"/>
        <end position="163"/>
    </location>
</feature>
<proteinExistence type="inferred from homology"/>
<reference key="1">
    <citation type="journal article" date="1996" name="Infect. Immun.">
        <title>The psa locus is responsible for thermoinducible binding of Yersinia pseudotuberculosis to cultured cells.</title>
        <authorList>
            <person name="Yang Y."/>
            <person name="Merriam J.J."/>
            <person name="Mueller J.P."/>
            <person name="Isberg R.R."/>
        </authorList>
    </citation>
    <scope>NUCLEOTIDE SEQUENCE [GENOMIC DNA]</scope>
    <source>
        <strain>YPIII / Serotype O:3</strain>
    </source>
</reference>
<reference key="2">
    <citation type="journal article" date="2004" name="Proc. Natl. Acad. Sci. U.S.A.">
        <title>Insights into the evolution of Yersinia pestis through whole-genome comparison with Yersinia pseudotuberculosis.</title>
        <authorList>
            <person name="Chain P.S.G."/>
            <person name="Carniel E."/>
            <person name="Larimer F.W."/>
            <person name="Lamerdin J."/>
            <person name="Stoutland P.O."/>
            <person name="Regala W.M."/>
            <person name="Georgescu A.M."/>
            <person name="Vergez L.M."/>
            <person name="Land M.L."/>
            <person name="Motin V.L."/>
            <person name="Brubaker R.R."/>
            <person name="Fowler J."/>
            <person name="Hinnebusch J."/>
            <person name="Marceau M."/>
            <person name="Medigue C."/>
            <person name="Simonet M."/>
            <person name="Chenal-Francisque V."/>
            <person name="Souza B."/>
            <person name="Dacheux D."/>
            <person name="Elliott J.M."/>
            <person name="Derbise A."/>
            <person name="Hauser L.J."/>
            <person name="Garcia E."/>
        </authorList>
    </citation>
    <scope>NUCLEOTIDE SEQUENCE [LARGE SCALE GENOMIC DNA]</scope>
    <source>
        <strain>IP32953</strain>
    </source>
</reference>
<dbReference type="EMBL" id="L76301">
    <property type="protein sequence ID" value="AAC37057.1"/>
    <property type="molecule type" value="Genomic_DNA"/>
</dbReference>
<dbReference type="EMBL" id="BX936398">
    <property type="protein sequence ID" value="CAH20575.1"/>
    <property type="molecule type" value="Genomic_DNA"/>
</dbReference>
<dbReference type="RefSeq" id="WP_002208793.1">
    <property type="nucleotide sequence ID" value="NZ_CP009712.1"/>
</dbReference>
<dbReference type="SMR" id="P69966"/>
<dbReference type="GeneID" id="57977436"/>
<dbReference type="KEGG" id="yps:YPTB1335"/>
<dbReference type="Proteomes" id="UP000001011">
    <property type="component" value="Chromosome"/>
</dbReference>
<dbReference type="GO" id="GO:0030288">
    <property type="term" value="C:outer membrane-bounded periplasmic space"/>
    <property type="evidence" value="ECO:0007669"/>
    <property type="project" value="InterPro"/>
</dbReference>
<dbReference type="GO" id="GO:0071555">
    <property type="term" value="P:cell wall organization"/>
    <property type="evidence" value="ECO:0007669"/>
    <property type="project" value="InterPro"/>
</dbReference>
<dbReference type="GO" id="GO:0061077">
    <property type="term" value="P:chaperone-mediated protein folding"/>
    <property type="evidence" value="ECO:0007669"/>
    <property type="project" value="InterPro"/>
</dbReference>
<dbReference type="Gene3D" id="2.60.40.10">
    <property type="entry name" value="Immunoglobulins"/>
    <property type="match status" value="2"/>
</dbReference>
<dbReference type="InterPro" id="IPR013783">
    <property type="entry name" value="Ig-like_fold"/>
</dbReference>
<dbReference type="InterPro" id="IPR008962">
    <property type="entry name" value="PapD-like_sf"/>
</dbReference>
<dbReference type="InterPro" id="IPR050643">
    <property type="entry name" value="Periplasmic_pilus_chap"/>
</dbReference>
<dbReference type="InterPro" id="IPR036316">
    <property type="entry name" value="Pili_assmbl_chap_C_dom_sf"/>
</dbReference>
<dbReference type="InterPro" id="IPR001829">
    <property type="entry name" value="Pili_assmbl_chaperone_bac"/>
</dbReference>
<dbReference type="InterPro" id="IPR016148">
    <property type="entry name" value="Pili_assmbl_chaperone_C"/>
</dbReference>
<dbReference type="InterPro" id="IPR018046">
    <property type="entry name" value="Pili_assmbl_chaperone_CS"/>
</dbReference>
<dbReference type="InterPro" id="IPR016147">
    <property type="entry name" value="Pili_assmbl_chaperone_N"/>
</dbReference>
<dbReference type="PANTHER" id="PTHR30251:SF9">
    <property type="entry name" value="CHAPERONE PROTEIN CAF1M"/>
    <property type="match status" value="1"/>
</dbReference>
<dbReference type="PANTHER" id="PTHR30251">
    <property type="entry name" value="PILUS ASSEMBLY CHAPERONE"/>
    <property type="match status" value="1"/>
</dbReference>
<dbReference type="Pfam" id="PF02753">
    <property type="entry name" value="PapD_C"/>
    <property type="match status" value="1"/>
</dbReference>
<dbReference type="Pfam" id="PF00345">
    <property type="entry name" value="PapD_N"/>
    <property type="match status" value="1"/>
</dbReference>
<dbReference type="PRINTS" id="PR00969">
    <property type="entry name" value="CHAPERONPILI"/>
</dbReference>
<dbReference type="SUPFAM" id="SSF49354">
    <property type="entry name" value="PapD-like"/>
    <property type="match status" value="1"/>
</dbReference>
<dbReference type="SUPFAM" id="SSF49584">
    <property type="entry name" value="Periplasmic chaperone C-domain"/>
    <property type="match status" value="1"/>
</dbReference>
<dbReference type="PROSITE" id="PS00635">
    <property type="entry name" value="PILI_CHAPERONE"/>
    <property type="match status" value="1"/>
</dbReference>
<sequence length="273" mass="30648">MKNLFFSAYKKVFSYITSIVIFMVSLPYAYSQDVVVNTTKHLFTVKIGTTRVIYPSSSTKGVSVSVANPQDYPILVQTQVKDEDKTSPAPFIVTPPLFRLDAGLQGRVRIIRTGGKFPEDRETLQWLCLTGIPPKNGDAWGNTQNNPKNSSPTMDIQMSISTCIKLLFRPDKVKGDPTDSADSLTWRYKGNYLEVNNPTPFYMNFYSLRIGDEKINLSDLGSKDEIKNGSYVPPFSSRDFIIPVKNKGKATEVFWQVINDNGGVSREFKSTVQ</sequence>
<accession>P69966</accession>
<accession>P31523</accession>
<accession>Q56979</accession>
<accession>Q66CR7</accession>
<protein>
    <recommendedName>
        <fullName>Chaperone protein PsaB</fullName>
    </recommendedName>
</protein>
<gene>
    <name type="primary">psaB</name>
    <name type="ordered locus">YPTB1335</name>
</gene>
<keyword id="KW-0143">Chaperone</keyword>
<keyword id="KW-1015">Disulfide bond</keyword>
<keyword id="KW-0393">Immunoglobulin domain</keyword>
<keyword id="KW-0574">Periplasm</keyword>
<keyword id="KW-0732">Signal</keyword>